<proteinExistence type="inferred from homology"/>
<evidence type="ECO:0000255" key="1">
    <source>
        <dbReference type="HAMAP-Rule" id="MF_00688"/>
    </source>
</evidence>
<name>LFTR_SHEPA</name>
<comment type="function">
    <text evidence="1">Functions in the N-end rule pathway of protein degradation where it conjugates Leu, Phe and, less efficiently, Met from aminoacyl-tRNAs to the N-termini of proteins containing an N-terminal arginine or lysine.</text>
</comment>
<comment type="catalytic activity">
    <reaction evidence="1">
        <text>N-terminal L-lysyl-[protein] + L-leucyl-tRNA(Leu) = N-terminal L-leucyl-L-lysyl-[protein] + tRNA(Leu) + H(+)</text>
        <dbReference type="Rhea" id="RHEA:12340"/>
        <dbReference type="Rhea" id="RHEA-COMP:9613"/>
        <dbReference type="Rhea" id="RHEA-COMP:9622"/>
        <dbReference type="Rhea" id="RHEA-COMP:12670"/>
        <dbReference type="Rhea" id="RHEA-COMP:12671"/>
        <dbReference type="ChEBI" id="CHEBI:15378"/>
        <dbReference type="ChEBI" id="CHEBI:65249"/>
        <dbReference type="ChEBI" id="CHEBI:78442"/>
        <dbReference type="ChEBI" id="CHEBI:78494"/>
        <dbReference type="ChEBI" id="CHEBI:133043"/>
        <dbReference type="EC" id="2.3.2.6"/>
    </reaction>
</comment>
<comment type="catalytic activity">
    <reaction evidence="1">
        <text>N-terminal L-arginyl-[protein] + L-leucyl-tRNA(Leu) = N-terminal L-leucyl-L-arginyl-[protein] + tRNA(Leu) + H(+)</text>
        <dbReference type="Rhea" id="RHEA:50416"/>
        <dbReference type="Rhea" id="RHEA-COMP:9613"/>
        <dbReference type="Rhea" id="RHEA-COMP:9622"/>
        <dbReference type="Rhea" id="RHEA-COMP:12672"/>
        <dbReference type="Rhea" id="RHEA-COMP:12673"/>
        <dbReference type="ChEBI" id="CHEBI:15378"/>
        <dbReference type="ChEBI" id="CHEBI:64719"/>
        <dbReference type="ChEBI" id="CHEBI:78442"/>
        <dbReference type="ChEBI" id="CHEBI:78494"/>
        <dbReference type="ChEBI" id="CHEBI:133044"/>
        <dbReference type="EC" id="2.3.2.6"/>
    </reaction>
</comment>
<comment type="catalytic activity">
    <reaction evidence="1">
        <text>L-phenylalanyl-tRNA(Phe) + an N-terminal L-alpha-aminoacyl-[protein] = an N-terminal L-phenylalanyl-L-alpha-aminoacyl-[protein] + tRNA(Phe)</text>
        <dbReference type="Rhea" id="RHEA:43632"/>
        <dbReference type="Rhea" id="RHEA-COMP:9668"/>
        <dbReference type="Rhea" id="RHEA-COMP:9699"/>
        <dbReference type="Rhea" id="RHEA-COMP:10636"/>
        <dbReference type="Rhea" id="RHEA-COMP:10637"/>
        <dbReference type="ChEBI" id="CHEBI:78442"/>
        <dbReference type="ChEBI" id="CHEBI:78531"/>
        <dbReference type="ChEBI" id="CHEBI:78597"/>
        <dbReference type="ChEBI" id="CHEBI:83561"/>
        <dbReference type="EC" id="2.3.2.6"/>
    </reaction>
</comment>
<comment type="subcellular location">
    <subcellularLocation>
        <location evidence="1">Cytoplasm</location>
    </subcellularLocation>
</comment>
<comment type="similarity">
    <text evidence="1">Belongs to the L/F-transferase family.</text>
</comment>
<feature type="chain" id="PRO_1000083103" description="Leucyl/phenylalanyl-tRNA--protein transferase">
    <location>
        <begin position="1"/>
        <end position="236"/>
    </location>
</feature>
<gene>
    <name evidence="1" type="primary">aat</name>
    <name type="ordered locus">Spea_2529</name>
</gene>
<reference key="1">
    <citation type="submission" date="2007-10" db="EMBL/GenBank/DDBJ databases">
        <title>Complete sequence of Shewanella pealeana ATCC 700345.</title>
        <authorList>
            <consortium name="US DOE Joint Genome Institute"/>
            <person name="Copeland A."/>
            <person name="Lucas S."/>
            <person name="Lapidus A."/>
            <person name="Barry K."/>
            <person name="Glavina del Rio T."/>
            <person name="Dalin E."/>
            <person name="Tice H."/>
            <person name="Pitluck S."/>
            <person name="Chertkov O."/>
            <person name="Brettin T."/>
            <person name="Bruce D."/>
            <person name="Detter J.C."/>
            <person name="Han C."/>
            <person name="Schmutz J."/>
            <person name="Larimer F."/>
            <person name="Land M."/>
            <person name="Hauser L."/>
            <person name="Kyrpides N."/>
            <person name="Kim E."/>
            <person name="Zhao J.-S.Z."/>
            <person name="Manno D."/>
            <person name="Hawari J."/>
            <person name="Richardson P."/>
        </authorList>
    </citation>
    <scope>NUCLEOTIDE SEQUENCE [LARGE SCALE GENOMIC DNA]</scope>
    <source>
        <strain>ATCC 700345 / ANG-SQ1</strain>
    </source>
</reference>
<protein>
    <recommendedName>
        <fullName evidence="1">Leucyl/phenylalanyl-tRNA--protein transferase</fullName>
        <ecNumber evidence="1">2.3.2.6</ecNumber>
    </recommendedName>
    <alternativeName>
        <fullName evidence="1">L/F-transferase</fullName>
    </alternativeName>
    <alternativeName>
        <fullName evidence="1">Leucyltransferase</fullName>
    </alternativeName>
    <alternativeName>
        <fullName evidence="1">Phenyalanyltransferase</fullName>
    </alternativeName>
</protein>
<dbReference type="EC" id="2.3.2.6" evidence="1"/>
<dbReference type="EMBL" id="CP000851">
    <property type="protein sequence ID" value="ABV87849.1"/>
    <property type="molecule type" value="Genomic_DNA"/>
</dbReference>
<dbReference type="RefSeq" id="WP_012155757.1">
    <property type="nucleotide sequence ID" value="NC_009901.1"/>
</dbReference>
<dbReference type="SMR" id="A8H5L2"/>
<dbReference type="STRING" id="398579.Spea_2529"/>
<dbReference type="KEGG" id="spl:Spea_2529"/>
<dbReference type="eggNOG" id="COG2360">
    <property type="taxonomic scope" value="Bacteria"/>
</dbReference>
<dbReference type="HOGENOM" id="CLU_075045_0_0_6"/>
<dbReference type="OrthoDB" id="9790282at2"/>
<dbReference type="Proteomes" id="UP000002608">
    <property type="component" value="Chromosome"/>
</dbReference>
<dbReference type="GO" id="GO:0005737">
    <property type="term" value="C:cytoplasm"/>
    <property type="evidence" value="ECO:0007669"/>
    <property type="project" value="UniProtKB-SubCell"/>
</dbReference>
<dbReference type="GO" id="GO:0008914">
    <property type="term" value="F:leucyl-tRNA--protein transferase activity"/>
    <property type="evidence" value="ECO:0007669"/>
    <property type="project" value="UniProtKB-UniRule"/>
</dbReference>
<dbReference type="GO" id="GO:0030163">
    <property type="term" value="P:protein catabolic process"/>
    <property type="evidence" value="ECO:0007669"/>
    <property type="project" value="UniProtKB-UniRule"/>
</dbReference>
<dbReference type="FunFam" id="3.30.70.3550:FF:000001">
    <property type="entry name" value="Leucyl/phenylalanyl-tRNA--protein transferase"/>
    <property type="match status" value="1"/>
</dbReference>
<dbReference type="FunFam" id="3.40.630.70:FF:000001">
    <property type="entry name" value="Leucyl/phenylalanyl-tRNA--protein transferase"/>
    <property type="match status" value="1"/>
</dbReference>
<dbReference type="Gene3D" id="3.40.630.70">
    <property type="entry name" value="Leucyl/phenylalanyl-tRNA-protein transferase, C-terminal domain"/>
    <property type="match status" value="1"/>
</dbReference>
<dbReference type="Gene3D" id="3.30.70.3550">
    <property type="entry name" value="Leucyl/phenylalanyl-tRNA-protein transferase, N-terminal domain"/>
    <property type="match status" value="1"/>
</dbReference>
<dbReference type="HAMAP" id="MF_00688">
    <property type="entry name" value="Leu_Phe_trans"/>
    <property type="match status" value="1"/>
</dbReference>
<dbReference type="InterPro" id="IPR016181">
    <property type="entry name" value="Acyl_CoA_acyltransferase"/>
</dbReference>
<dbReference type="InterPro" id="IPR004616">
    <property type="entry name" value="Leu/Phe-tRNA_Trfase"/>
</dbReference>
<dbReference type="InterPro" id="IPR042203">
    <property type="entry name" value="Leu/Phe-tRNA_Trfase_C"/>
</dbReference>
<dbReference type="InterPro" id="IPR042221">
    <property type="entry name" value="Leu/Phe-tRNA_Trfase_N"/>
</dbReference>
<dbReference type="NCBIfam" id="TIGR00667">
    <property type="entry name" value="aat"/>
    <property type="match status" value="1"/>
</dbReference>
<dbReference type="PANTHER" id="PTHR30098">
    <property type="entry name" value="LEUCYL/PHENYLALANYL-TRNA--PROTEIN TRANSFERASE"/>
    <property type="match status" value="1"/>
</dbReference>
<dbReference type="PANTHER" id="PTHR30098:SF2">
    <property type="entry name" value="LEUCYL_PHENYLALANYL-TRNA--PROTEIN TRANSFERASE"/>
    <property type="match status" value="1"/>
</dbReference>
<dbReference type="Pfam" id="PF03588">
    <property type="entry name" value="Leu_Phe_trans"/>
    <property type="match status" value="1"/>
</dbReference>
<dbReference type="SUPFAM" id="SSF55729">
    <property type="entry name" value="Acyl-CoA N-acyltransferases (Nat)"/>
    <property type="match status" value="1"/>
</dbReference>
<keyword id="KW-0012">Acyltransferase</keyword>
<keyword id="KW-0963">Cytoplasm</keyword>
<keyword id="KW-1185">Reference proteome</keyword>
<keyword id="KW-0808">Transferase</keyword>
<organism>
    <name type="scientific">Shewanella pealeana (strain ATCC 700345 / ANG-SQ1)</name>
    <dbReference type="NCBI Taxonomy" id="398579"/>
    <lineage>
        <taxon>Bacteria</taxon>
        <taxon>Pseudomonadati</taxon>
        <taxon>Pseudomonadota</taxon>
        <taxon>Gammaproteobacteria</taxon>
        <taxon>Alteromonadales</taxon>
        <taxon>Shewanellaceae</taxon>
        <taxon>Shewanella</taxon>
    </lineage>
</organism>
<accession>A8H5L2</accession>
<sequence>MNSLSYLNHAQQAFPPPEQALIEPNGLLAVGGDLHPERLLNAYYNGIFPWFNLDDPILWWSPDPRAVFVPGNMKISRSLVKYLKKQNWTYTINHAFEAVTAGCAEPRAGQDGTWISSEIQQAYLSLHHQGHAHSLEVWQNNELIGGLYGLAIGQVFCGESMFHRTTNASKAAMIVLQQHLQRCGFKLIDAQVVNPHLDSLGAKSIKRDDFLRLLAHLRDGTVSLDSWRKSEVTIEL</sequence>